<accession>Q7SZC5</accession>
<feature type="chain" id="PRO_0000235244" description="Nucleoporin NDC1">
    <location>
        <begin position="1"/>
        <end position="671"/>
    </location>
</feature>
<feature type="topological domain" description="Cytoplasmic" evidence="2">
    <location>
        <begin position="1"/>
        <end position="19"/>
    </location>
</feature>
<feature type="transmembrane region" description="Helical; Name=1" evidence="2">
    <location>
        <begin position="20"/>
        <end position="40"/>
    </location>
</feature>
<feature type="topological domain" description="Perinuclear space" evidence="2">
    <location>
        <begin position="41"/>
        <end position="64"/>
    </location>
</feature>
<feature type="transmembrane region" description="Helical; Name=2" evidence="2">
    <location>
        <begin position="65"/>
        <end position="85"/>
    </location>
</feature>
<feature type="topological domain" description="Cytoplasmic" evidence="2">
    <location>
        <begin position="86"/>
        <end position="109"/>
    </location>
</feature>
<feature type="transmembrane region" description="Helical; Name=3" evidence="2">
    <location>
        <begin position="110"/>
        <end position="130"/>
    </location>
</feature>
<feature type="topological domain" description="Perinuclear space" evidence="2">
    <location>
        <begin position="131"/>
        <end position="156"/>
    </location>
</feature>
<feature type="transmembrane region" description="Helical; Name=4" evidence="2">
    <location>
        <begin position="157"/>
        <end position="177"/>
    </location>
</feature>
<feature type="topological domain" description="Cytoplasmic" evidence="2">
    <location>
        <begin position="178"/>
        <end position="220"/>
    </location>
</feature>
<feature type="transmembrane region" description="Helical; Name=5" evidence="2">
    <location>
        <begin position="221"/>
        <end position="241"/>
    </location>
</feature>
<feature type="topological domain" description="Perinuclear space" evidence="2">
    <location>
        <begin position="242"/>
        <end position="260"/>
    </location>
</feature>
<feature type="transmembrane region" description="Helical; Name=6" evidence="2">
    <location>
        <begin position="261"/>
        <end position="281"/>
    </location>
</feature>
<feature type="topological domain" description="Cytoplasmic" evidence="2">
    <location>
        <begin position="282"/>
        <end position="671"/>
    </location>
</feature>
<feature type="region of interest" description="Disordered" evidence="3">
    <location>
        <begin position="378"/>
        <end position="420"/>
    </location>
</feature>
<feature type="region of interest" description="Disordered" evidence="3">
    <location>
        <begin position="480"/>
        <end position="508"/>
    </location>
</feature>
<feature type="compositionally biased region" description="Low complexity" evidence="3">
    <location>
        <begin position="385"/>
        <end position="403"/>
    </location>
</feature>
<feature type="compositionally biased region" description="Pro residues" evidence="3">
    <location>
        <begin position="496"/>
        <end position="506"/>
    </location>
</feature>
<organism>
    <name type="scientific">Danio rerio</name>
    <name type="common">Zebrafish</name>
    <name type="synonym">Brachydanio rerio</name>
    <dbReference type="NCBI Taxonomy" id="7955"/>
    <lineage>
        <taxon>Eukaryota</taxon>
        <taxon>Metazoa</taxon>
        <taxon>Chordata</taxon>
        <taxon>Craniata</taxon>
        <taxon>Vertebrata</taxon>
        <taxon>Euteleostomi</taxon>
        <taxon>Actinopterygii</taxon>
        <taxon>Neopterygii</taxon>
        <taxon>Teleostei</taxon>
        <taxon>Ostariophysi</taxon>
        <taxon>Cypriniformes</taxon>
        <taxon>Danionidae</taxon>
        <taxon>Danioninae</taxon>
        <taxon>Danio</taxon>
    </lineage>
</organism>
<evidence type="ECO:0000250" key="1"/>
<evidence type="ECO:0000255" key="2"/>
<evidence type="ECO:0000256" key="3">
    <source>
        <dbReference type="SAM" id="MobiDB-lite"/>
    </source>
</evidence>
<evidence type="ECO:0000305" key="4"/>
<comment type="function">
    <text evidence="1">Component of the nuclear pore complex (NPC), which plays a key role in de novo assembly and insertion of NPC in the nuclear envelope. Required for NPC and nuclear envelope assembly, possibly by forming a link between the nuclear envelope membrane and soluble nucleoporins, thereby anchoring the NPC in the membrane (By similarity).</text>
</comment>
<comment type="subcellular location">
    <subcellularLocation>
        <location evidence="1">Nucleus</location>
        <location evidence="1">Nuclear pore complex</location>
    </subcellularLocation>
    <subcellularLocation>
        <location evidence="1">Nucleus membrane</location>
        <topology evidence="1">Multi-pass membrane protein</topology>
    </subcellularLocation>
    <text evidence="1">Central core structure of the nuclear pore complex.</text>
</comment>
<comment type="similarity">
    <text evidence="4">Belongs to the NDC1 family.</text>
</comment>
<proteinExistence type="evidence at transcript level"/>
<name>NDC1_DANRE</name>
<protein>
    <recommendedName>
        <fullName>Nucleoporin NDC1</fullName>
    </recommendedName>
    <alternativeName>
        <fullName>Transmembrane protein 48</fullName>
    </alternativeName>
</protein>
<reference key="1">
    <citation type="submission" date="2003-06" db="EMBL/GenBank/DDBJ databases">
        <authorList>
            <consortium name="NIH - Zebrafish Gene Collection (ZGC) project"/>
        </authorList>
    </citation>
    <scope>NUCLEOTIDE SEQUENCE [LARGE SCALE MRNA]</scope>
    <source>
        <strain>AB</strain>
    </source>
</reference>
<keyword id="KW-0472">Membrane</keyword>
<keyword id="KW-0509">mRNA transport</keyword>
<keyword id="KW-0906">Nuclear pore complex</keyword>
<keyword id="KW-0539">Nucleus</keyword>
<keyword id="KW-0653">Protein transport</keyword>
<keyword id="KW-1185">Reference proteome</keyword>
<keyword id="KW-0811">Translocation</keyword>
<keyword id="KW-0812">Transmembrane</keyword>
<keyword id="KW-1133">Transmembrane helix</keyword>
<keyword id="KW-0813">Transport</keyword>
<dbReference type="EMBL" id="BC053915">
    <property type="protein sequence ID" value="AAH53915.1"/>
    <property type="molecule type" value="mRNA"/>
</dbReference>
<dbReference type="RefSeq" id="NP_956237.1">
    <property type="nucleotide sequence ID" value="NM_199943.1"/>
</dbReference>
<dbReference type="SMR" id="Q7SZC5"/>
<dbReference type="BioGRID" id="85684">
    <property type="interactions" value="1"/>
</dbReference>
<dbReference type="FunCoup" id="Q7SZC5">
    <property type="interactions" value="1064"/>
</dbReference>
<dbReference type="STRING" id="7955.ENSDARP00000016349"/>
<dbReference type="PaxDb" id="7955-ENSDARP00000016349"/>
<dbReference type="GeneID" id="335236"/>
<dbReference type="KEGG" id="dre:335236"/>
<dbReference type="AGR" id="ZFIN:ZDB-GENE-030131-7176"/>
<dbReference type="CTD" id="55706"/>
<dbReference type="ZFIN" id="ZDB-GENE-030131-7176">
    <property type="gene designation" value="ndc1"/>
</dbReference>
<dbReference type="eggNOG" id="KOG4358">
    <property type="taxonomic scope" value="Eukaryota"/>
</dbReference>
<dbReference type="InParanoid" id="Q7SZC5"/>
<dbReference type="OrthoDB" id="67850at2759"/>
<dbReference type="PhylomeDB" id="Q7SZC5"/>
<dbReference type="PRO" id="PR:Q7SZC5"/>
<dbReference type="Proteomes" id="UP000000437">
    <property type="component" value="Chromosome 2"/>
</dbReference>
<dbReference type="GO" id="GO:0031965">
    <property type="term" value="C:nuclear membrane"/>
    <property type="evidence" value="ECO:0007669"/>
    <property type="project" value="UniProtKB-SubCell"/>
</dbReference>
<dbReference type="GO" id="GO:0070762">
    <property type="term" value="C:nuclear pore transmembrane ring"/>
    <property type="evidence" value="ECO:0000318"/>
    <property type="project" value="GO_Central"/>
</dbReference>
<dbReference type="GO" id="GO:0030674">
    <property type="term" value="F:protein-macromolecule adaptor activity"/>
    <property type="evidence" value="ECO:0000318"/>
    <property type="project" value="GO_Central"/>
</dbReference>
<dbReference type="GO" id="GO:0051028">
    <property type="term" value="P:mRNA transport"/>
    <property type="evidence" value="ECO:0007669"/>
    <property type="project" value="UniProtKB-KW"/>
</dbReference>
<dbReference type="GO" id="GO:0006999">
    <property type="term" value="P:nuclear pore organization"/>
    <property type="evidence" value="ECO:0000318"/>
    <property type="project" value="GO_Central"/>
</dbReference>
<dbReference type="GO" id="GO:0015031">
    <property type="term" value="P:protein transport"/>
    <property type="evidence" value="ECO:0007669"/>
    <property type="project" value="UniProtKB-KW"/>
</dbReference>
<dbReference type="InterPro" id="IPR019049">
    <property type="entry name" value="Nucleoporin_prot_Ndc1/Nup"/>
</dbReference>
<dbReference type="PANTHER" id="PTHR13269">
    <property type="entry name" value="NUCLEOPORIN NDC1"/>
    <property type="match status" value="1"/>
</dbReference>
<dbReference type="PANTHER" id="PTHR13269:SF6">
    <property type="entry name" value="NUCLEOPORIN NDC1"/>
    <property type="match status" value="1"/>
</dbReference>
<dbReference type="Pfam" id="PF09531">
    <property type="entry name" value="Ndc1_Nup"/>
    <property type="match status" value="1"/>
</dbReference>
<gene>
    <name type="primary">ndc1</name>
    <name type="synonym">tmem48</name>
    <name type="ORF">zgc:55636</name>
</gene>
<sequence>MFSMKQNCWFIRKVVIWRAVASIAWSVLLLPITTAVFVLLSRFSLFHPIQWISDCTNLLTASSTIFSLMVLCAVVLITGFFNLEFYTLVPSIPCSRVALLGTVLHPLQCVHSLVYSSMGMLVMWCASVIISGRYSTLGTPCMQNESGDVLTCLNEYHLFLLLAGAFMGYSHSFLGVVKNMYYVSFQPIQQYKYPQFKGCLPMLLKCSVIQSLYSTRNFAALYFFFGYVPRAWISSTLNLPIDSSLQPLDSLTGLLDFSLLYHLSISGTFLYFTWYLTVLIFRIYATEAYSFPVQSTFSEDAERCLPKVVGEKSTLVMKFLALQDLALLSQHSPSRRQEVFSLSQPGGHPHNWNAISGECLCLLRDLTQRLVAHQDAVASNGRVKSQSASSDTRSASSSSSVLSGMEDVPETPRPTVPLRTPGSVFKSSVGGMHSSLTAPFTPDVDSPFCSPAIRRLVGQQDPQSPWFGTVQSPHIMRRGPKLWSASTESQSNGSPPASPAIAPSPPAANKKPSFLAQWLQNRKEQVKSFLAKRVLIVYLFNKLPEASSQALFADSQAHIWALQGLSHLVAASFSEDQFGVVQTTLPSILSSLVVLLEAVDRHFKLPHASSKPARTVCSMGDSTYKTLRFALRAALKTAIYKITTTFGEHLNAVNISTEHRKRLQQFLEFKE</sequence>